<organism>
    <name type="scientific">Lactococcus lactis subsp. cremoris (strain MG1363)</name>
    <dbReference type="NCBI Taxonomy" id="416870"/>
    <lineage>
        <taxon>Bacteria</taxon>
        <taxon>Bacillati</taxon>
        <taxon>Bacillota</taxon>
        <taxon>Bacilli</taxon>
        <taxon>Lactobacillales</taxon>
        <taxon>Streptococcaceae</taxon>
        <taxon>Lactococcus</taxon>
        <taxon>Lactococcus cremoris subsp. cremoris</taxon>
    </lineage>
</organism>
<evidence type="ECO:0000255" key="1">
    <source>
        <dbReference type="HAMAP-Rule" id="MF_02006"/>
    </source>
</evidence>
<reference key="1">
    <citation type="journal article" date="2007" name="J. Bacteriol.">
        <title>The complete genome sequence of the lactic acid bacterial paradigm Lactococcus lactis subsp. cremoris MG1363.</title>
        <authorList>
            <person name="Wegmann U."/>
            <person name="O'Connell-Motherway M."/>
            <person name="Zomer A."/>
            <person name="Buist G."/>
            <person name="Shearman C."/>
            <person name="Canchaya C."/>
            <person name="Ventura M."/>
            <person name="Goesmann A."/>
            <person name="Gasson M.J."/>
            <person name="Kuipers O.P."/>
            <person name="van Sinderen D."/>
            <person name="Kok J."/>
        </authorList>
    </citation>
    <scope>NUCLEOTIDE SEQUENCE [LARGE SCALE GENOMIC DNA]</scope>
    <source>
        <strain>MG1363</strain>
    </source>
</reference>
<dbReference type="EC" id="6.1.1.1" evidence="1"/>
<dbReference type="EMBL" id="AM406671">
    <property type="protein sequence ID" value="CAL97006.1"/>
    <property type="molecule type" value="Genomic_DNA"/>
</dbReference>
<dbReference type="RefSeq" id="WP_011834453.1">
    <property type="nucleotide sequence ID" value="NC_009004.1"/>
</dbReference>
<dbReference type="SMR" id="A2RIB1"/>
<dbReference type="STRING" id="416870.llmg_0401"/>
<dbReference type="KEGG" id="llm:llmg_0401"/>
<dbReference type="eggNOG" id="COG0162">
    <property type="taxonomic scope" value="Bacteria"/>
</dbReference>
<dbReference type="HOGENOM" id="CLU_024003_0_3_9"/>
<dbReference type="OrthoDB" id="9804243at2"/>
<dbReference type="PhylomeDB" id="A2RIB1"/>
<dbReference type="Proteomes" id="UP000000364">
    <property type="component" value="Chromosome"/>
</dbReference>
<dbReference type="GO" id="GO:0005829">
    <property type="term" value="C:cytosol"/>
    <property type="evidence" value="ECO:0007669"/>
    <property type="project" value="TreeGrafter"/>
</dbReference>
<dbReference type="GO" id="GO:0005524">
    <property type="term" value="F:ATP binding"/>
    <property type="evidence" value="ECO:0007669"/>
    <property type="project" value="UniProtKB-UniRule"/>
</dbReference>
<dbReference type="GO" id="GO:0003723">
    <property type="term" value="F:RNA binding"/>
    <property type="evidence" value="ECO:0007669"/>
    <property type="project" value="UniProtKB-KW"/>
</dbReference>
<dbReference type="GO" id="GO:0004831">
    <property type="term" value="F:tyrosine-tRNA ligase activity"/>
    <property type="evidence" value="ECO:0007669"/>
    <property type="project" value="UniProtKB-UniRule"/>
</dbReference>
<dbReference type="GO" id="GO:0006437">
    <property type="term" value="P:tyrosyl-tRNA aminoacylation"/>
    <property type="evidence" value="ECO:0007669"/>
    <property type="project" value="UniProtKB-UniRule"/>
</dbReference>
<dbReference type="CDD" id="cd00165">
    <property type="entry name" value="S4"/>
    <property type="match status" value="1"/>
</dbReference>
<dbReference type="CDD" id="cd00805">
    <property type="entry name" value="TyrRS_core"/>
    <property type="match status" value="1"/>
</dbReference>
<dbReference type="FunFam" id="1.10.240.10:FF:000001">
    <property type="entry name" value="Tyrosine--tRNA ligase"/>
    <property type="match status" value="1"/>
</dbReference>
<dbReference type="FunFam" id="3.40.50.620:FF:000008">
    <property type="entry name" value="Tyrosine--tRNA ligase"/>
    <property type="match status" value="1"/>
</dbReference>
<dbReference type="Gene3D" id="3.40.50.620">
    <property type="entry name" value="HUPs"/>
    <property type="match status" value="1"/>
</dbReference>
<dbReference type="Gene3D" id="3.10.290.10">
    <property type="entry name" value="RNA-binding S4 domain"/>
    <property type="match status" value="1"/>
</dbReference>
<dbReference type="Gene3D" id="1.10.240.10">
    <property type="entry name" value="Tyrosyl-Transfer RNA Synthetase"/>
    <property type="match status" value="1"/>
</dbReference>
<dbReference type="HAMAP" id="MF_02006">
    <property type="entry name" value="Tyr_tRNA_synth_type1"/>
    <property type="match status" value="1"/>
</dbReference>
<dbReference type="InterPro" id="IPR001412">
    <property type="entry name" value="aa-tRNA-synth_I_CS"/>
</dbReference>
<dbReference type="InterPro" id="IPR002305">
    <property type="entry name" value="aa-tRNA-synth_Ic"/>
</dbReference>
<dbReference type="InterPro" id="IPR014729">
    <property type="entry name" value="Rossmann-like_a/b/a_fold"/>
</dbReference>
<dbReference type="InterPro" id="IPR002942">
    <property type="entry name" value="S4_RNA-bd"/>
</dbReference>
<dbReference type="InterPro" id="IPR036986">
    <property type="entry name" value="S4_RNA-bd_sf"/>
</dbReference>
<dbReference type="InterPro" id="IPR054608">
    <property type="entry name" value="SYY-like_C"/>
</dbReference>
<dbReference type="InterPro" id="IPR002307">
    <property type="entry name" value="Tyr-tRNA-ligase"/>
</dbReference>
<dbReference type="InterPro" id="IPR024088">
    <property type="entry name" value="Tyr-tRNA-ligase_bac-type"/>
</dbReference>
<dbReference type="InterPro" id="IPR024107">
    <property type="entry name" value="Tyr-tRNA-ligase_bac_1"/>
</dbReference>
<dbReference type="NCBIfam" id="TIGR00234">
    <property type="entry name" value="tyrS"/>
    <property type="match status" value="1"/>
</dbReference>
<dbReference type="PANTHER" id="PTHR11766:SF0">
    <property type="entry name" value="TYROSINE--TRNA LIGASE, MITOCHONDRIAL"/>
    <property type="match status" value="1"/>
</dbReference>
<dbReference type="PANTHER" id="PTHR11766">
    <property type="entry name" value="TYROSYL-TRNA SYNTHETASE"/>
    <property type="match status" value="1"/>
</dbReference>
<dbReference type="Pfam" id="PF22421">
    <property type="entry name" value="SYY_C-terminal"/>
    <property type="match status" value="1"/>
</dbReference>
<dbReference type="Pfam" id="PF00579">
    <property type="entry name" value="tRNA-synt_1b"/>
    <property type="match status" value="1"/>
</dbReference>
<dbReference type="PRINTS" id="PR01040">
    <property type="entry name" value="TRNASYNTHTYR"/>
</dbReference>
<dbReference type="SMART" id="SM00363">
    <property type="entry name" value="S4"/>
    <property type="match status" value="1"/>
</dbReference>
<dbReference type="SUPFAM" id="SSF55174">
    <property type="entry name" value="Alpha-L RNA-binding motif"/>
    <property type="match status" value="1"/>
</dbReference>
<dbReference type="SUPFAM" id="SSF52374">
    <property type="entry name" value="Nucleotidylyl transferase"/>
    <property type="match status" value="1"/>
</dbReference>
<dbReference type="PROSITE" id="PS00178">
    <property type="entry name" value="AA_TRNA_LIGASE_I"/>
    <property type="match status" value="1"/>
</dbReference>
<dbReference type="PROSITE" id="PS50889">
    <property type="entry name" value="S4"/>
    <property type="match status" value="1"/>
</dbReference>
<sequence>MNIFDELKARGLVFQTTDEAALSKALTEDMVSYYVGYDPTADSLHLGNLVLILTMKRLQMAGHKPYALVGGATGLIGDPSFKDSERSLQTKDTVTKWSGKIRSQLERFLDFENGENKAEMTNNYNWFENLTFIDFLRDVGKHFTVNYMISKDSVKSRMESGISYTEFAYQIMQGYDFYELNQLHNVTLQLGGSDQWGNMTAGTELLRRKANKQGHVITIPLITDSTGKKFGKSEGNAIWLDADKTSPYEMYQFWLNVDDADAVKMLKIFTFLSLEEIAEIEEQFEAARHERLAQKVLAREVVSLVHGKEAYEQAVKTSEILFGGGDLRQLDAKSILTGLKAAPQHQIAPDEDLTLIELLISVGIAPSKRQAREDITNGAIYINGERVQELDYVLTDSDKIENRLTVIRRGKKKNFVLTY</sequence>
<comment type="function">
    <text evidence="1">Catalyzes the attachment of tyrosine to tRNA(Tyr) in a two-step reaction: tyrosine is first activated by ATP to form Tyr-AMP and then transferred to the acceptor end of tRNA(Tyr).</text>
</comment>
<comment type="catalytic activity">
    <reaction evidence="1">
        <text>tRNA(Tyr) + L-tyrosine + ATP = L-tyrosyl-tRNA(Tyr) + AMP + diphosphate + H(+)</text>
        <dbReference type="Rhea" id="RHEA:10220"/>
        <dbReference type="Rhea" id="RHEA-COMP:9706"/>
        <dbReference type="Rhea" id="RHEA-COMP:9707"/>
        <dbReference type="ChEBI" id="CHEBI:15378"/>
        <dbReference type="ChEBI" id="CHEBI:30616"/>
        <dbReference type="ChEBI" id="CHEBI:33019"/>
        <dbReference type="ChEBI" id="CHEBI:58315"/>
        <dbReference type="ChEBI" id="CHEBI:78442"/>
        <dbReference type="ChEBI" id="CHEBI:78536"/>
        <dbReference type="ChEBI" id="CHEBI:456215"/>
        <dbReference type="EC" id="6.1.1.1"/>
    </reaction>
</comment>
<comment type="subunit">
    <text evidence="1">Homodimer.</text>
</comment>
<comment type="subcellular location">
    <subcellularLocation>
        <location evidence="1">Cytoplasm</location>
    </subcellularLocation>
</comment>
<comment type="similarity">
    <text evidence="1">Belongs to the class-I aminoacyl-tRNA synthetase family. TyrS type 1 subfamily.</text>
</comment>
<name>SYY_LACLM</name>
<gene>
    <name evidence="1" type="primary">tyrS</name>
    <name type="ordered locus">llmg_0401</name>
</gene>
<accession>A2RIB1</accession>
<feature type="chain" id="PRO_1000088598" description="Tyrosine--tRNA ligase">
    <location>
        <begin position="1"/>
        <end position="419"/>
    </location>
</feature>
<feature type="domain" description="S4 RNA-binding" evidence="1">
    <location>
        <begin position="353"/>
        <end position="419"/>
    </location>
</feature>
<feature type="short sequence motif" description="'HIGH' region">
    <location>
        <begin position="39"/>
        <end position="48"/>
    </location>
</feature>
<feature type="short sequence motif" description="'KMSKS' region">
    <location>
        <begin position="229"/>
        <end position="233"/>
    </location>
</feature>
<feature type="binding site" evidence="1">
    <location>
        <position position="34"/>
    </location>
    <ligand>
        <name>L-tyrosine</name>
        <dbReference type="ChEBI" id="CHEBI:58315"/>
    </ligand>
</feature>
<feature type="binding site" evidence="1">
    <location>
        <position position="169"/>
    </location>
    <ligand>
        <name>L-tyrosine</name>
        <dbReference type="ChEBI" id="CHEBI:58315"/>
    </ligand>
</feature>
<feature type="binding site" evidence="1">
    <location>
        <position position="173"/>
    </location>
    <ligand>
        <name>L-tyrosine</name>
        <dbReference type="ChEBI" id="CHEBI:58315"/>
    </ligand>
</feature>
<feature type="binding site" evidence="1">
    <location>
        <position position="232"/>
    </location>
    <ligand>
        <name>ATP</name>
        <dbReference type="ChEBI" id="CHEBI:30616"/>
    </ligand>
</feature>
<protein>
    <recommendedName>
        <fullName evidence="1">Tyrosine--tRNA ligase</fullName>
        <ecNumber evidence="1">6.1.1.1</ecNumber>
    </recommendedName>
    <alternativeName>
        <fullName evidence="1">Tyrosyl-tRNA synthetase</fullName>
        <shortName evidence="1">TyrRS</shortName>
    </alternativeName>
</protein>
<proteinExistence type="inferred from homology"/>
<keyword id="KW-0030">Aminoacyl-tRNA synthetase</keyword>
<keyword id="KW-0067">ATP-binding</keyword>
<keyword id="KW-0963">Cytoplasm</keyword>
<keyword id="KW-0436">Ligase</keyword>
<keyword id="KW-0547">Nucleotide-binding</keyword>
<keyword id="KW-0648">Protein biosynthesis</keyword>
<keyword id="KW-0694">RNA-binding</keyword>